<accession>P30222</accession>
<organism>
    <name type="scientific">Petunia hybrida</name>
    <name type="common">Petunia</name>
    <dbReference type="NCBI Taxonomy" id="4102"/>
    <lineage>
        <taxon>Eukaryota</taxon>
        <taxon>Viridiplantae</taxon>
        <taxon>Streptophyta</taxon>
        <taxon>Embryophyta</taxon>
        <taxon>Tracheophyta</taxon>
        <taxon>Spermatophyta</taxon>
        <taxon>Magnoliopsida</taxon>
        <taxon>eudicotyledons</taxon>
        <taxon>Gunneridae</taxon>
        <taxon>Pentapetalae</taxon>
        <taxon>asterids</taxon>
        <taxon>lamiids</taxon>
        <taxon>Solanales</taxon>
        <taxon>Solanaceae</taxon>
        <taxon>Petunioideae</taxon>
        <taxon>Petunia</taxon>
    </lineage>
</organism>
<proteinExistence type="evidence at transcript level"/>
<evidence type="ECO:0000255" key="1"/>
<evidence type="ECO:0000255" key="2">
    <source>
        <dbReference type="PROSITE-ProRule" id="PRU00285"/>
    </source>
</evidence>
<reference key="1">
    <citation type="journal article" date="1991" name="Mol. Gen. Genet.">
        <title>Analysis of conserved domains identifies a unique structural feature of a chloroplast heat shock protein.</title>
        <authorList>
            <person name="Chen Q."/>
            <person name="Vierling E."/>
        </authorList>
    </citation>
    <scope>NUCLEOTIDE SEQUENCE [MRNA]</scope>
    <source>
        <strain>cv. Mitchell</strain>
        <tissue>Leaf</tissue>
    </source>
</reference>
<feature type="transit peptide" description="Chloroplast" evidence="1">
    <location>
        <begin position="1"/>
        <end status="unknown"/>
    </location>
</feature>
<feature type="chain" id="PRO_0000013533" description="Small heat shock protein, chloroplastic">
    <location>
        <begin status="unknown"/>
        <end position="241"/>
    </location>
</feature>
<feature type="domain" description="sHSP" evidence="2">
    <location>
        <begin position="133"/>
        <end position="241"/>
    </location>
</feature>
<name>HS22C_PETHY</name>
<protein>
    <recommendedName>
        <fullName>Small heat shock protein, chloroplastic</fullName>
    </recommendedName>
</protein>
<dbReference type="EMBL" id="X54103">
    <property type="protein sequence ID" value="CAA38037.1"/>
    <property type="molecule type" value="mRNA"/>
</dbReference>
<dbReference type="PIR" id="S16004">
    <property type="entry name" value="S16004"/>
</dbReference>
<dbReference type="SMR" id="P30222"/>
<dbReference type="GO" id="GO:0009507">
    <property type="term" value="C:chloroplast"/>
    <property type="evidence" value="ECO:0007669"/>
    <property type="project" value="UniProtKB-SubCell"/>
</dbReference>
<dbReference type="GO" id="GO:0009408">
    <property type="term" value="P:response to heat"/>
    <property type="evidence" value="ECO:0007669"/>
    <property type="project" value="InterPro"/>
</dbReference>
<dbReference type="CDD" id="cd06464">
    <property type="entry name" value="ACD_sHsps-like"/>
    <property type="match status" value="1"/>
</dbReference>
<dbReference type="FunFam" id="2.60.40.790:FF:000059">
    <property type="entry name" value="26.5 kDa heat shock protein, mitochondrial"/>
    <property type="match status" value="1"/>
</dbReference>
<dbReference type="Gene3D" id="2.60.40.790">
    <property type="match status" value="1"/>
</dbReference>
<dbReference type="InterPro" id="IPR002068">
    <property type="entry name" value="A-crystallin/Hsp20_dom"/>
</dbReference>
<dbReference type="InterPro" id="IPR008978">
    <property type="entry name" value="HSP20-like_chaperone"/>
</dbReference>
<dbReference type="InterPro" id="IPR044587">
    <property type="entry name" value="HSP21-like"/>
</dbReference>
<dbReference type="PANTHER" id="PTHR46733">
    <property type="entry name" value="26.5 KDA HEAT SHOCK PROTEIN, MITOCHONDRIAL"/>
    <property type="match status" value="1"/>
</dbReference>
<dbReference type="PANTHER" id="PTHR46733:SF4">
    <property type="entry name" value="HEAT SHOCK PROTEIN 21, CHLOROPLASTIC"/>
    <property type="match status" value="1"/>
</dbReference>
<dbReference type="Pfam" id="PF00011">
    <property type="entry name" value="HSP20"/>
    <property type="match status" value="1"/>
</dbReference>
<dbReference type="SUPFAM" id="SSF49764">
    <property type="entry name" value="HSP20-like chaperones"/>
    <property type="match status" value="1"/>
</dbReference>
<dbReference type="PROSITE" id="PS01031">
    <property type="entry name" value="SHSP"/>
    <property type="match status" value="1"/>
</dbReference>
<sequence length="241" mass="26796">MACKTLTCSASPLVSNGVVSATSRTNNKKTTTAPFSVCFPYSKCSVRKPASRLVAQATGDNKDTSVDVHVSNNNQGGNNQGSAVERRPRRMALDVSPFGLLDPMSPMRTMRQMMDTMDRLFEDTMTFPGSRNRGTGEIRAPWDIKDDENEIKMRFDMPGLSKEEVKVSVEDDVLVIKGEHKKEESGKDDSWGRNYSSYDTRLSLPDNVDKDKVKAELKNGVLLISIPKTKVEKKVTDVEIK</sequence>
<gene>
    <name type="primary">HSP22</name>
</gene>
<keyword id="KW-0150">Chloroplast</keyword>
<keyword id="KW-0934">Plastid</keyword>
<keyword id="KW-0346">Stress response</keyword>
<keyword id="KW-0809">Transit peptide</keyword>
<comment type="subcellular location">
    <subcellularLocation>
        <location>Plastid</location>
        <location>Chloroplast</location>
    </subcellularLocation>
</comment>
<comment type="similarity">
    <text evidence="2">Belongs to the small heat shock protein (HSP20) family.</text>
</comment>